<accession>Q69560</accession>
<comment type="function">
    <text evidence="1">Participates in the assembly of the infectious particles by decorating the outer surface of the capsid shell and thus forming a layer between the capsid and the tegument. Complexes composed of the major capsid protein and small capsomere-interacting protein/SCP assemble together in the host cytoplasm and are translocated to the nucleus, where they accumulate and participate in capsid assembly.</text>
</comment>
<comment type="subunit">
    <text evidence="1">Interacts with the major capsid protein/MCP.</text>
</comment>
<comment type="subcellular location">
    <subcellularLocation>
        <location evidence="1">Virion</location>
    </subcellularLocation>
    <subcellularLocation>
        <location evidence="1">Host nucleus</location>
    </subcellularLocation>
</comment>
<comment type="similarity">
    <text evidence="1">Belongs to the herpesviridae small capsomere-interacting protein family.</text>
</comment>
<name>SCP_HHV6U</name>
<protein>
    <recommendedName>
        <fullName evidence="1">Small capsomere-interacting protein</fullName>
    </recommendedName>
</protein>
<sequence>MTTIRSDDLSNQITQISGSSKKEEEKKKQQMLTGVLGLQPNMASHPVLGVFLPKYAKQNGGNVDKTAFRLDLIRMLALHRLNTKTGSD</sequence>
<reference key="1">
    <citation type="journal article" date="1994" name="J. Virol.">
        <title>Nucleotide sequence analysis of a 38.5-kilobase-pair region of the genome of human herpesvirus 6 encoding human cytomegalovirus immediate-early gene homologs and transactivating functions.</title>
        <authorList>
            <person name="Nicholas J."/>
            <person name="Martin M.E.D."/>
        </authorList>
    </citation>
    <scope>NUCLEOTIDE SEQUENCE [GENOMIC DNA]</scope>
</reference>
<reference key="2">
    <citation type="journal article" date="1995" name="Virology">
        <title>The DNA sequence of human herpesvirus-6: structure, coding content, and genome evolution.</title>
        <authorList>
            <person name="Gompels U.A."/>
            <person name="Nicholas J."/>
            <person name="Lawrence G.L."/>
            <person name="Jones M."/>
            <person name="Thomson B.J."/>
            <person name="Martin M.E.D."/>
            <person name="Efstathiou S."/>
            <person name="Craxton M.A."/>
            <person name="Macaulay H.A."/>
        </authorList>
    </citation>
    <scope>NUCLEOTIDE SEQUENCE [LARGE SCALE GENOMIC DNA]</scope>
</reference>
<dbReference type="EMBL" id="L25528">
    <property type="status" value="NOT_ANNOTATED_CDS"/>
    <property type="molecule type" value="Genomic_DNA"/>
</dbReference>
<dbReference type="EMBL" id="X83413">
    <property type="protein sequence ID" value="CAA58412.1"/>
    <property type="molecule type" value="Genomic_DNA"/>
</dbReference>
<dbReference type="RefSeq" id="NP_042925.1">
    <property type="nucleotide sequence ID" value="NC_001664.2"/>
</dbReference>
<dbReference type="SMR" id="Q69560"/>
<dbReference type="DNASU" id="1487909"/>
<dbReference type="GeneID" id="1487909"/>
<dbReference type="KEGG" id="vg:1487909"/>
<dbReference type="Proteomes" id="UP000009295">
    <property type="component" value="Segment"/>
</dbReference>
<dbReference type="GO" id="GO:0042025">
    <property type="term" value="C:host cell nucleus"/>
    <property type="evidence" value="ECO:0007669"/>
    <property type="project" value="UniProtKB-SubCell"/>
</dbReference>
<dbReference type="GO" id="GO:0019028">
    <property type="term" value="C:viral capsid"/>
    <property type="evidence" value="ECO:0007669"/>
    <property type="project" value="UniProtKB-UniRule"/>
</dbReference>
<dbReference type="GO" id="GO:0016032">
    <property type="term" value="P:viral process"/>
    <property type="evidence" value="ECO:0007669"/>
    <property type="project" value="UniProtKB-UniRule"/>
</dbReference>
<dbReference type="HAMAP" id="MF_04021">
    <property type="entry name" value="HSV_SCP_betahv"/>
    <property type="match status" value="1"/>
</dbReference>
<dbReference type="InterPro" id="IPR031385">
    <property type="entry name" value="HV_small_capsid"/>
</dbReference>
<dbReference type="Pfam" id="PF17086">
    <property type="entry name" value="HV_small_capsid"/>
    <property type="match status" value="1"/>
</dbReference>
<feature type="chain" id="PRO_0000342580" description="Small capsomere-interacting protein">
    <location>
        <begin position="1"/>
        <end position="88"/>
    </location>
</feature>
<feature type="region of interest" description="Disordered" evidence="2">
    <location>
        <begin position="1"/>
        <end position="30"/>
    </location>
</feature>
<feature type="compositionally biased region" description="Polar residues" evidence="2">
    <location>
        <begin position="9"/>
        <end position="19"/>
    </location>
</feature>
<gene>
    <name evidence="1" type="primary">SCP</name>
    <name type="synonym">U32</name>
</gene>
<evidence type="ECO:0000255" key="1">
    <source>
        <dbReference type="HAMAP-Rule" id="MF_04021"/>
    </source>
</evidence>
<evidence type="ECO:0000256" key="2">
    <source>
        <dbReference type="SAM" id="MobiDB-lite"/>
    </source>
</evidence>
<proteinExistence type="inferred from homology"/>
<organism>
    <name type="scientific">Human herpesvirus 6A (strain Uganda-1102)</name>
    <name type="common">HHV-6 variant A</name>
    <name type="synonym">Human B lymphotropic virus</name>
    <dbReference type="NCBI Taxonomy" id="10370"/>
    <lineage>
        <taxon>Viruses</taxon>
        <taxon>Duplodnaviria</taxon>
        <taxon>Heunggongvirae</taxon>
        <taxon>Peploviricota</taxon>
        <taxon>Herviviricetes</taxon>
        <taxon>Herpesvirales</taxon>
        <taxon>Orthoherpesviridae</taxon>
        <taxon>Betaherpesvirinae</taxon>
        <taxon>Roseolovirus</taxon>
        <taxon>Roseolovirus humanbeta6a</taxon>
        <taxon>Human betaherpesvirus 6A</taxon>
    </lineage>
</organism>
<organismHost>
    <name type="scientific">Homo sapiens</name>
    <name type="common">Human</name>
    <dbReference type="NCBI Taxonomy" id="9606"/>
</organismHost>
<keyword id="KW-0167">Capsid protein</keyword>
<keyword id="KW-1048">Host nucleus</keyword>
<keyword id="KW-1185">Reference proteome</keyword>
<keyword id="KW-0946">Virion</keyword>